<name>RL5_CLOP1</name>
<evidence type="ECO:0000255" key="1">
    <source>
        <dbReference type="HAMAP-Rule" id="MF_01333"/>
    </source>
</evidence>
<evidence type="ECO:0000305" key="2"/>
<organism>
    <name type="scientific">Clostridium perfringens (strain ATCC 13124 / DSM 756 / JCM 1290 / NCIMB 6125 / NCTC 8237 / Type A)</name>
    <dbReference type="NCBI Taxonomy" id="195103"/>
    <lineage>
        <taxon>Bacteria</taxon>
        <taxon>Bacillati</taxon>
        <taxon>Bacillota</taxon>
        <taxon>Clostridia</taxon>
        <taxon>Eubacteriales</taxon>
        <taxon>Clostridiaceae</taxon>
        <taxon>Clostridium</taxon>
    </lineage>
</organism>
<reference key="1">
    <citation type="journal article" date="2006" name="Genome Res.">
        <title>Skewed genomic variability in strains of the toxigenic bacterial pathogen, Clostridium perfringens.</title>
        <authorList>
            <person name="Myers G.S.A."/>
            <person name="Rasko D.A."/>
            <person name="Cheung J.K."/>
            <person name="Ravel J."/>
            <person name="Seshadri R."/>
            <person name="DeBoy R.T."/>
            <person name="Ren Q."/>
            <person name="Varga J."/>
            <person name="Awad M.M."/>
            <person name="Brinkac L.M."/>
            <person name="Daugherty S.C."/>
            <person name="Haft D.H."/>
            <person name="Dodson R.J."/>
            <person name="Madupu R."/>
            <person name="Nelson W.C."/>
            <person name="Rosovitz M.J."/>
            <person name="Sullivan S.A."/>
            <person name="Khouri H."/>
            <person name="Dimitrov G.I."/>
            <person name="Watkins K.L."/>
            <person name="Mulligan S."/>
            <person name="Benton J."/>
            <person name="Radune D."/>
            <person name="Fisher D.J."/>
            <person name="Atkins H.S."/>
            <person name="Hiscox T."/>
            <person name="Jost B.H."/>
            <person name="Billington S.J."/>
            <person name="Songer J.G."/>
            <person name="McClane B.A."/>
            <person name="Titball R.W."/>
            <person name="Rood J.I."/>
            <person name="Melville S.B."/>
            <person name="Paulsen I.T."/>
        </authorList>
    </citation>
    <scope>NUCLEOTIDE SEQUENCE [LARGE SCALE GENOMIC DNA]</scope>
    <source>
        <strain>ATCC 13124 / DSM 756 / JCM 1290 / NCIMB 6125 / NCTC 8237 / S 107 / Type A</strain>
    </source>
</reference>
<keyword id="KW-0687">Ribonucleoprotein</keyword>
<keyword id="KW-0689">Ribosomal protein</keyword>
<keyword id="KW-0694">RNA-binding</keyword>
<keyword id="KW-0699">rRNA-binding</keyword>
<keyword id="KW-0820">tRNA-binding</keyword>
<dbReference type="EMBL" id="CP000246">
    <property type="protein sequence ID" value="ABG82482.1"/>
    <property type="molecule type" value="Genomic_DNA"/>
</dbReference>
<dbReference type="RefSeq" id="WP_003454431.1">
    <property type="nucleotide sequence ID" value="NC_008261.1"/>
</dbReference>
<dbReference type="SMR" id="Q0TMQ8"/>
<dbReference type="STRING" id="195103.CPF_2702"/>
<dbReference type="PaxDb" id="195103-CPF_2702"/>
<dbReference type="GeneID" id="93001021"/>
<dbReference type="KEGG" id="cpf:CPF_2702"/>
<dbReference type="eggNOG" id="COG0094">
    <property type="taxonomic scope" value="Bacteria"/>
</dbReference>
<dbReference type="HOGENOM" id="CLU_061015_2_1_9"/>
<dbReference type="Proteomes" id="UP000001823">
    <property type="component" value="Chromosome"/>
</dbReference>
<dbReference type="GO" id="GO:1990904">
    <property type="term" value="C:ribonucleoprotein complex"/>
    <property type="evidence" value="ECO:0007669"/>
    <property type="project" value="UniProtKB-KW"/>
</dbReference>
<dbReference type="GO" id="GO:0005840">
    <property type="term" value="C:ribosome"/>
    <property type="evidence" value="ECO:0007669"/>
    <property type="project" value="UniProtKB-KW"/>
</dbReference>
<dbReference type="GO" id="GO:0019843">
    <property type="term" value="F:rRNA binding"/>
    <property type="evidence" value="ECO:0007669"/>
    <property type="project" value="UniProtKB-UniRule"/>
</dbReference>
<dbReference type="GO" id="GO:0003735">
    <property type="term" value="F:structural constituent of ribosome"/>
    <property type="evidence" value="ECO:0007669"/>
    <property type="project" value="InterPro"/>
</dbReference>
<dbReference type="GO" id="GO:0000049">
    <property type="term" value="F:tRNA binding"/>
    <property type="evidence" value="ECO:0007669"/>
    <property type="project" value="UniProtKB-UniRule"/>
</dbReference>
<dbReference type="GO" id="GO:0006412">
    <property type="term" value="P:translation"/>
    <property type="evidence" value="ECO:0007669"/>
    <property type="project" value="UniProtKB-UniRule"/>
</dbReference>
<dbReference type="FunFam" id="3.30.1440.10:FF:000001">
    <property type="entry name" value="50S ribosomal protein L5"/>
    <property type="match status" value="1"/>
</dbReference>
<dbReference type="Gene3D" id="3.30.1440.10">
    <property type="match status" value="1"/>
</dbReference>
<dbReference type="HAMAP" id="MF_01333_B">
    <property type="entry name" value="Ribosomal_uL5_B"/>
    <property type="match status" value="1"/>
</dbReference>
<dbReference type="InterPro" id="IPR002132">
    <property type="entry name" value="Ribosomal_uL5"/>
</dbReference>
<dbReference type="InterPro" id="IPR020930">
    <property type="entry name" value="Ribosomal_uL5_bac-type"/>
</dbReference>
<dbReference type="InterPro" id="IPR031309">
    <property type="entry name" value="Ribosomal_uL5_C"/>
</dbReference>
<dbReference type="InterPro" id="IPR020929">
    <property type="entry name" value="Ribosomal_uL5_CS"/>
</dbReference>
<dbReference type="InterPro" id="IPR022803">
    <property type="entry name" value="Ribosomal_uL5_dom_sf"/>
</dbReference>
<dbReference type="InterPro" id="IPR031310">
    <property type="entry name" value="Ribosomal_uL5_N"/>
</dbReference>
<dbReference type="NCBIfam" id="NF000585">
    <property type="entry name" value="PRK00010.1"/>
    <property type="match status" value="1"/>
</dbReference>
<dbReference type="PANTHER" id="PTHR11994">
    <property type="entry name" value="60S RIBOSOMAL PROTEIN L11-RELATED"/>
    <property type="match status" value="1"/>
</dbReference>
<dbReference type="Pfam" id="PF00281">
    <property type="entry name" value="Ribosomal_L5"/>
    <property type="match status" value="1"/>
</dbReference>
<dbReference type="Pfam" id="PF00673">
    <property type="entry name" value="Ribosomal_L5_C"/>
    <property type="match status" value="1"/>
</dbReference>
<dbReference type="PIRSF" id="PIRSF002161">
    <property type="entry name" value="Ribosomal_L5"/>
    <property type="match status" value="1"/>
</dbReference>
<dbReference type="SUPFAM" id="SSF55282">
    <property type="entry name" value="RL5-like"/>
    <property type="match status" value="1"/>
</dbReference>
<dbReference type="PROSITE" id="PS00358">
    <property type="entry name" value="RIBOSOMAL_L5"/>
    <property type="match status" value="1"/>
</dbReference>
<comment type="function">
    <text evidence="1">This is one of the proteins that bind and probably mediate the attachment of the 5S RNA into the large ribosomal subunit, where it forms part of the central protuberance. In the 70S ribosome it contacts protein S13 of the 30S subunit (bridge B1b), connecting the 2 subunits; this bridge is implicated in subunit movement. Contacts the P site tRNA; the 5S rRNA and some of its associated proteins might help stabilize positioning of ribosome-bound tRNAs.</text>
</comment>
<comment type="subunit">
    <text evidence="1">Part of the 50S ribosomal subunit; part of the 5S rRNA/L5/L18/L25 subcomplex. Contacts the 5S rRNA and the P site tRNA. Forms a bridge to the 30S subunit in the 70S ribosome.</text>
</comment>
<comment type="similarity">
    <text evidence="1">Belongs to the universal ribosomal protein uL5 family.</text>
</comment>
<feature type="chain" id="PRO_1000052723" description="Large ribosomal subunit protein uL5">
    <location>
        <begin position="1"/>
        <end position="179"/>
    </location>
</feature>
<sequence length="179" mass="20352">MNRLQERYEKEVVPAMMEKFGYKNIMQVPKIEKVVINMGVGEAKDNPKVLESAVSDLQIIAGQKPVLTRAKKSVANFKIRENMALGCKVTLRKTNMYEFVDKLVSIALPRVRDFRGVSAKAFDGRGNYSLGIKEQLIFPEIEYDKVDKVRGMDIIFVTSANTDEEARELLRFLGMPFAQ</sequence>
<proteinExistence type="inferred from homology"/>
<gene>
    <name evidence="1" type="primary">rplE</name>
    <name type="ordered locus">CPF_2702</name>
</gene>
<protein>
    <recommendedName>
        <fullName evidence="1">Large ribosomal subunit protein uL5</fullName>
    </recommendedName>
    <alternativeName>
        <fullName evidence="2">50S ribosomal protein L5</fullName>
    </alternativeName>
</protein>
<accession>Q0TMQ8</accession>